<organism>
    <name type="scientific">Bothrops bilineatus</name>
    <name type="common">Green jararaca</name>
    <name type="synonym">Bothriopsis bilineata</name>
    <dbReference type="NCBI Taxonomy" id="44724"/>
    <lineage>
        <taxon>Eukaryota</taxon>
        <taxon>Metazoa</taxon>
        <taxon>Chordata</taxon>
        <taxon>Craniata</taxon>
        <taxon>Vertebrata</taxon>
        <taxon>Euteleostomi</taxon>
        <taxon>Lepidosauria</taxon>
        <taxon>Squamata</taxon>
        <taxon>Bifurcata</taxon>
        <taxon>Unidentata</taxon>
        <taxon>Episquamata</taxon>
        <taxon>Toxicofera</taxon>
        <taxon>Serpentes</taxon>
        <taxon>Colubroidea</taxon>
        <taxon>Viperidae</taxon>
        <taxon>Crotalinae</taxon>
        <taxon>Bothrops</taxon>
    </lineage>
</organism>
<name>CYB_BOTBI</name>
<feature type="chain" id="PRO_0000060683" description="Cytochrome b">
    <location>
        <begin position="1" status="less than"/>
        <end position="214" status="greater than"/>
    </location>
</feature>
<feature type="transmembrane region" description="Helical" evidence="3">
    <location>
        <begin position="31"/>
        <end position="51"/>
    </location>
</feature>
<feature type="transmembrane region" description="Helical" evidence="2">
    <location>
        <begin position="75"/>
        <end position="96"/>
    </location>
</feature>
<feature type="transmembrane region" description="Helical" evidence="2">
    <location>
        <begin position="111"/>
        <end position="131"/>
    </location>
</feature>
<feature type="transmembrane region" description="Helical" evidence="3">
    <location>
        <begin position="176"/>
        <end position="196"/>
    </location>
</feature>
<feature type="binding site" description="axial binding residue" evidence="2">
    <location>
        <position position="81"/>
    </location>
    <ligand>
        <name>heme b</name>
        <dbReference type="ChEBI" id="CHEBI:60344"/>
        <label>b562</label>
    </ligand>
    <ligandPart>
        <name>Fe</name>
        <dbReference type="ChEBI" id="CHEBI:18248"/>
    </ligandPart>
</feature>
<feature type="binding site" description="axial binding residue" evidence="2">
    <location>
        <position position="95"/>
    </location>
    <ligand>
        <name>heme b</name>
        <dbReference type="ChEBI" id="CHEBI:60344"/>
        <label>b566</label>
    </ligand>
    <ligandPart>
        <name>Fe</name>
        <dbReference type="ChEBI" id="CHEBI:18248"/>
    </ligandPart>
</feature>
<feature type="binding site" description="axial binding residue" evidence="2">
    <location>
        <position position="180"/>
    </location>
    <ligand>
        <name>heme b</name>
        <dbReference type="ChEBI" id="CHEBI:60344"/>
        <label>b562</label>
    </ligand>
    <ligandPart>
        <name>Fe</name>
        <dbReference type="ChEBI" id="CHEBI:18248"/>
    </ligandPart>
</feature>
<feature type="binding site" description="axial binding residue" evidence="2">
    <location>
        <position position="194"/>
    </location>
    <ligand>
        <name>heme b</name>
        <dbReference type="ChEBI" id="CHEBI:60344"/>
        <label>b566</label>
    </ligand>
    <ligandPart>
        <name>Fe</name>
        <dbReference type="ChEBI" id="CHEBI:18248"/>
    </ligandPart>
</feature>
<feature type="binding site" evidence="2">
    <location>
        <position position="199"/>
    </location>
    <ligand>
        <name>a ubiquinone</name>
        <dbReference type="ChEBI" id="CHEBI:16389"/>
    </ligand>
</feature>
<feature type="non-terminal residue">
    <location>
        <position position="1"/>
    </location>
</feature>
<feature type="non-terminal residue">
    <location>
        <position position="214"/>
    </location>
</feature>
<reference key="1">
    <citation type="journal article" date="1998" name="Mol. Phylogenet. Evol.">
        <title>Weighting and congruence: a case study based on three mitochondrial genes in pitvipers.</title>
        <authorList>
            <person name="Vidal N."/>
            <person name="Lecointre G."/>
        </authorList>
    </citation>
    <scope>NUCLEOTIDE SEQUENCE [GENOMIC DNA]</scope>
</reference>
<reference key="2">
    <citation type="journal article" date="1997" name="C. R. Acad. Sci. III, Sci. Vie">
        <title>Molecular systematics of pitvipers: paraphyly of the Bothrops complex.</title>
        <authorList>
            <person name="Vidal N."/>
            <person name="Lecointre G."/>
            <person name="Vie J.-C."/>
            <person name="Gasc J.-P."/>
        </authorList>
    </citation>
    <scope>NUCLEOTIDE SEQUENCE [GENOMIC DNA] OF 1-132</scope>
</reference>
<protein>
    <recommendedName>
        <fullName>Cytochrome b</fullName>
    </recommendedName>
    <alternativeName>
        <fullName>Complex III subunit 3</fullName>
    </alternativeName>
    <alternativeName>
        <fullName>Complex III subunit III</fullName>
    </alternativeName>
    <alternativeName>
        <fullName>Cytochrome b-c1 complex subunit 3</fullName>
    </alternativeName>
    <alternativeName>
        <fullName>Ubiquinol-cytochrome-c reductase complex cytochrome b subunit</fullName>
    </alternativeName>
</protein>
<accession>P92847</accession>
<comment type="function">
    <text evidence="2">Component of the ubiquinol-cytochrome c reductase complex (complex III or cytochrome b-c1 complex) that is part of the mitochondrial respiratory chain. The b-c1 complex mediates electron transfer from ubiquinol to cytochrome c. Contributes to the generation of a proton gradient across the mitochondrial membrane that is then used for ATP synthesis.</text>
</comment>
<comment type="cofactor">
    <cofactor evidence="2">
        <name>heme b</name>
        <dbReference type="ChEBI" id="CHEBI:60344"/>
    </cofactor>
    <text evidence="2">Binds 2 heme b groups non-covalently.</text>
</comment>
<comment type="subunit">
    <text evidence="2">The cytochrome bc1 complex contains 3 respiratory subunits (MT-CYB, CYC1 and UQCRFS1), 2 core proteins (UQCRC1 and UQCRC2) and probably 6 low-molecular weight proteins.</text>
</comment>
<comment type="subcellular location">
    <subcellularLocation>
        <location evidence="2">Mitochondrion inner membrane</location>
        <topology evidence="2">Multi-pass membrane protein</topology>
    </subcellularLocation>
</comment>
<comment type="miscellaneous">
    <text evidence="1">Heme 1 (or BL or b562) is low-potential and absorbs at about 562 nm, and heme 2 (or BH or b566) is high-potential and absorbs at about 566 nm.</text>
</comment>
<comment type="similarity">
    <text evidence="3">Belongs to the cytochrome b family.</text>
</comment>
<comment type="caution">
    <text evidence="2">The full-length protein contains only eight transmembrane helices, not nine as predicted by bioinformatics tools.</text>
</comment>
<sequence length="214" mass="24005">SINYKNMPHQHLLTLLSLLPVGSNISTWWNFGSMLLACLMTQIITGFFLAIHYTANINLAFSSIIHLSRDVPCGWIMQNTHAISASLFFICIYIHIARGLYYGSYLYKEVWLSGTTLLIILMATAFFGYVLPWGQMSFWAATVITNLLTAIPYLGTTLTTWLWGGFAINDPTLTRFFALHFIFPFIIISMSSIHILLLHNEGSSNPLGTNSDIG</sequence>
<keyword id="KW-0249">Electron transport</keyword>
<keyword id="KW-0349">Heme</keyword>
<keyword id="KW-0408">Iron</keyword>
<keyword id="KW-0472">Membrane</keyword>
<keyword id="KW-0479">Metal-binding</keyword>
<keyword id="KW-0496">Mitochondrion</keyword>
<keyword id="KW-0999">Mitochondrion inner membrane</keyword>
<keyword id="KW-0679">Respiratory chain</keyword>
<keyword id="KW-0812">Transmembrane</keyword>
<keyword id="KW-1133">Transmembrane helix</keyword>
<keyword id="KW-0813">Transport</keyword>
<keyword id="KW-0830">Ubiquinone</keyword>
<gene>
    <name type="primary">MT-CYB</name>
    <name type="synonym">COB</name>
    <name type="synonym">CYTB</name>
    <name type="synonym">MTCYB</name>
</gene>
<proteinExistence type="inferred from homology"/>
<dbReference type="EMBL" id="AF039269">
    <property type="protein sequence ID" value="AAC33546.1"/>
    <property type="molecule type" value="Genomic_DNA"/>
</dbReference>
<dbReference type="SMR" id="P92847"/>
<dbReference type="GO" id="GO:0005743">
    <property type="term" value="C:mitochondrial inner membrane"/>
    <property type="evidence" value="ECO:0007669"/>
    <property type="project" value="UniProtKB-SubCell"/>
</dbReference>
<dbReference type="GO" id="GO:0046872">
    <property type="term" value="F:metal ion binding"/>
    <property type="evidence" value="ECO:0007669"/>
    <property type="project" value="UniProtKB-KW"/>
</dbReference>
<dbReference type="GO" id="GO:0008121">
    <property type="term" value="F:ubiquinol-cytochrome-c reductase activity"/>
    <property type="evidence" value="ECO:0007669"/>
    <property type="project" value="TreeGrafter"/>
</dbReference>
<dbReference type="GO" id="GO:0006122">
    <property type="term" value="P:mitochondrial electron transport, ubiquinol to cytochrome c"/>
    <property type="evidence" value="ECO:0007669"/>
    <property type="project" value="TreeGrafter"/>
</dbReference>
<dbReference type="CDD" id="cd00284">
    <property type="entry name" value="Cytochrome_b_N"/>
    <property type="match status" value="1"/>
</dbReference>
<dbReference type="Gene3D" id="1.20.810.10">
    <property type="entry name" value="Cytochrome Bc1 Complex, Chain C"/>
    <property type="match status" value="1"/>
</dbReference>
<dbReference type="InterPro" id="IPR005797">
    <property type="entry name" value="Cyt_b/b6_N"/>
</dbReference>
<dbReference type="InterPro" id="IPR027387">
    <property type="entry name" value="Cytb/b6-like_sf"/>
</dbReference>
<dbReference type="InterPro" id="IPR048259">
    <property type="entry name" value="Cytochrome_b_N_euk/bac"/>
</dbReference>
<dbReference type="InterPro" id="IPR016174">
    <property type="entry name" value="Di-haem_cyt_TM"/>
</dbReference>
<dbReference type="PANTHER" id="PTHR19271">
    <property type="entry name" value="CYTOCHROME B"/>
    <property type="match status" value="1"/>
</dbReference>
<dbReference type="PANTHER" id="PTHR19271:SF16">
    <property type="entry name" value="CYTOCHROME B"/>
    <property type="match status" value="1"/>
</dbReference>
<dbReference type="Pfam" id="PF00033">
    <property type="entry name" value="Cytochrome_B"/>
    <property type="match status" value="1"/>
</dbReference>
<dbReference type="SUPFAM" id="SSF81342">
    <property type="entry name" value="Transmembrane di-heme cytochromes"/>
    <property type="match status" value="1"/>
</dbReference>
<dbReference type="PROSITE" id="PS51002">
    <property type="entry name" value="CYTB_NTER"/>
    <property type="match status" value="1"/>
</dbReference>
<geneLocation type="mitochondrion"/>
<evidence type="ECO:0000250" key="1"/>
<evidence type="ECO:0000250" key="2">
    <source>
        <dbReference type="UniProtKB" id="P00157"/>
    </source>
</evidence>
<evidence type="ECO:0000255" key="3">
    <source>
        <dbReference type="PROSITE-ProRule" id="PRU00968"/>
    </source>
</evidence>